<evidence type="ECO:0000250" key="1"/>
<evidence type="ECO:0000255" key="2"/>
<evidence type="ECO:0000305" key="3"/>
<accession>P0AC10</accession>
<accession>P33134</accession>
<name>FLIQ_SHIFL</name>
<organism>
    <name type="scientific">Shigella flexneri</name>
    <dbReference type="NCBI Taxonomy" id="623"/>
    <lineage>
        <taxon>Bacteria</taxon>
        <taxon>Pseudomonadati</taxon>
        <taxon>Pseudomonadota</taxon>
        <taxon>Gammaproteobacteria</taxon>
        <taxon>Enterobacterales</taxon>
        <taxon>Enterobacteriaceae</taxon>
        <taxon>Shigella</taxon>
    </lineage>
</organism>
<sequence>MTPESVMMMGTEAMKVALALAAPLLLVALVTGLIISILQAATQINEMTLSFIPKIIAVFIAIIIAGPWMLNLLLDYVRTLFTNLPYIIG</sequence>
<comment type="function">
    <text evidence="1">Required for the assembly of the rivet at the earliest stage of flagellar biosynthesis.</text>
</comment>
<comment type="subcellular location">
    <subcellularLocation>
        <location evidence="1">Cell inner membrane</location>
        <topology evidence="1">Multi-pass membrane protein</topology>
    </subcellularLocation>
    <subcellularLocation>
        <location evidence="1">Bacterial flagellum basal body</location>
    </subcellularLocation>
</comment>
<comment type="similarity">
    <text evidence="3">Belongs to the FliQ/MopD/SpaQ family.</text>
</comment>
<keyword id="KW-0975">Bacterial flagellum</keyword>
<keyword id="KW-0997">Cell inner membrane</keyword>
<keyword id="KW-1003">Cell membrane</keyword>
<keyword id="KW-0472">Membrane</keyword>
<keyword id="KW-1185">Reference proteome</keyword>
<keyword id="KW-0812">Transmembrane</keyword>
<keyword id="KW-1133">Transmembrane helix</keyword>
<reference key="1">
    <citation type="journal article" date="2002" name="Nucleic Acids Res.">
        <title>Genome sequence of Shigella flexneri 2a: insights into pathogenicity through comparison with genomes of Escherichia coli K12 and O157.</title>
        <authorList>
            <person name="Jin Q."/>
            <person name="Yuan Z."/>
            <person name="Xu J."/>
            <person name="Wang Y."/>
            <person name="Shen Y."/>
            <person name="Lu W."/>
            <person name="Wang J."/>
            <person name="Liu H."/>
            <person name="Yang J."/>
            <person name="Yang F."/>
            <person name="Zhang X."/>
            <person name="Zhang J."/>
            <person name="Yang G."/>
            <person name="Wu H."/>
            <person name="Qu D."/>
            <person name="Dong J."/>
            <person name="Sun L."/>
            <person name="Xue Y."/>
            <person name="Zhao A."/>
            <person name="Gao Y."/>
            <person name="Zhu J."/>
            <person name="Kan B."/>
            <person name="Ding K."/>
            <person name="Chen S."/>
            <person name="Cheng H."/>
            <person name="Yao Z."/>
            <person name="He B."/>
            <person name="Chen R."/>
            <person name="Ma D."/>
            <person name="Qiang B."/>
            <person name="Wen Y."/>
            <person name="Hou Y."/>
            <person name="Yu J."/>
        </authorList>
    </citation>
    <scope>NUCLEOTIDE SEQUENCE [LARGE SCALE GENOMIC DNA]</scope>
    <source>
        <strain>301 / Serotype 2a</strain>
    </source>
</reference>
<reference key="2">
    <citation type="journal article" date="2003" name="Infect. Immun.">
        <title>Complete genome sequence and comparative genomics of Shigella flexneri serotype 2a strain 2457T.</title>
        <authorList>
            <person name="Wei J."/>
            <person name="Goldberg M.B."/>
            <person name="Burland V."/>
            <person name="Venkatesan M.M."/>
            <person name="Deng W."/>
            <person name="Fournier G."/>
            <person name="Mayhew G.F."/>
            <person name="Plunkett G. III"/>
            <person name="Rose D.J."/>
            <person name="Darling A."/>
            <person name="Mau B."/>
            <person name="Perna N.T."/>
            <person name="Payne S.M."/>
            <person name="Runyen-Janecky L.J."/>
            <person name="Zhou S."/>
            <person name="Schwartz D.C."/>
            <person name="Blattner F.R."/>
        </authorList>
    </citation>
    <scope>NUCLEOTIDE SEQUENCE [LARGE SCALE GENOMIC DNA]</scope>
    <source>
        <strain>ATCC 700930 / 2457T / Serotype 2a</strain>
    </source>
</reference>
<protein>
    <recommendedName>
        <fullName>Flagellar biosynthetic protein FliQ</fullName>
    </recommendedName>
</protein>
<feature type="chain" id="PRO_0000129098" description="Flagellar biosynthetic protein FliQ">
    <location>
        <begin position="1"/>
        <end position="89"/>
    </location>
</feature>
<feature type="transmembrane region" description="Helical" evidence="2">
    <location>
        <begin position="16"/>
        <end position="40"/>
    </location>
</feature>
<feature type="transmembrane region" description="Helical" evidence="2">
    <location>
        <begin position="55"/>
        <end position="75"/>
    </location>
</feature>
<proteinExistence type="inferred from homology"/>
<gene>
    <name type="primary">fliQ</name>
    <name type="ordered locus">SF1994</name>
    <name type="ordered locus">S2088</name>
</gene>
<dbReference type="EMBL" id="AE005674">
    <property type="protein sequence ID" value="AAN43541.1"/>
    <property type="molecule type" value="Genomic_DNA"/>
</dbReference>
<dbReference type="EMBL" id="AE014073">
    <property type="protein sequence ID" value="AAP17367.1"/>
    <property type="molecule type" value="Genomic_DNA"/>
</dbReference>
<dbReference type="RefSeq" id="NP_707834.1">
    <property type="nucleotide sequence ID" value="NC_004337.2"/>
</dbReference>
<dbReference type="RefSeq" id="WP_000187358.1">
    <property type="nucleotide sequence ID" value="NZ_WPGW01000059.1"/>
</dbReference>
<dbReference type="SMR" id="P0AC10"/>
<dbReference type="STRING" id="198214.SF1994"/>
<dbReference type="PaxDb" id="198214-SF1994"/>
<dbReference type="GeneID" id="1025209"/>
<dbReference type="GeneID" id="93775236"/>
<dbReference type="KEGG" id="sfl:SF1994"/>
<dbReference type="KEGG" id="sfx:S2088"/>
<dbReference type="PATRIC" id="fig|198214.7.peg.2382"/>
<dbReference type="HOGENOM" id="CLU_164516_2_0_6"/>
<dbReference type="Proteomes" id="UP000001006">
    <property type="component" value="Chromosome"/>
</dbReference>
<dbReference type="Proteomes" id="UP000002673">
    <property type="component" value="Chromosome"/>
</dbReference>
<dbReference type="GO" id="GO:0009425">
    <property type="term" value="C:bacterial-type flagellum basal body"/>
    <property type="evidence" value="ECO:0007669"/>
    <property type="project" value="UniProtKB-SubCell"/>
</dbReference>
<dbReference type="GO" id="GO:0005886">
    <property type="term" value="C:plasma membrane"/>
    <property type="evidence" value="ECO:0007669"/>
    <property type="project" value="UniProtKB-SubCell"/>
</dbReference>
<dbReference type="GO" id="GO:0044780">
    <property type="term" value="P:bacterial-type flagellum assembly"/>
    <property type="evidence" value="ECO:0007669"/>
    <property type="project" value="InterPro"/>
</dbReference>
<dbReference type="GO" id="GO:0009306">
    <property type="term" value="P:protein secretion"/>
    <property type="evidence" value="ECO:0007669"/>
    <property type="project" value="InterPro"/>
</dbReference>
<dbReference type="InterPro" id="IPR002191">
    <property type="entry name" value="Bac_export_3"/>
</dbReference>
<dbReference type="InterPro" id="IPR006305">
    <property type="entry name" value="FliQ"/>
</dbReference>
<dbReference type="NCBIfam" id="TIGR01402">
    <property type="entry name" value="fliQ"/>
    <property type="match status" value="1"/>
</dbReference>
<dbReference type="PANTHER" id="PTHR34040">
    <property type="entry name" value="FLAGELLAR BIOSYNTHETIC PROTEIN FLIQ"/>
    <property type="match status" value="1"/>
</dbReference>
<dbReference type="PANTHER" id="PTHR34040:SF2">
    <property type="entry name" value="FLAGELLAR BIOSYNTHETIC PROTEIN FLIQ"/>
    <property type="match status" value="1"/>
</dbReference>
<dbReference type="Pfam" id="PF01313">
    <property type="entry name" value="Bac_export_3"/>
    <property type="match status" value="1"/>
</dbReference>
<dbReference type="PIRSF" id="PIRSF004669">
    <property type="entry name" value="FliQ"/>
    <property type="match status" value="1"/>
</dbReference>
<dbReference type="PRINTS" id="PR00952">
    <property type="entry name" value="TYPE3IMQPROT"/>
</dbReference>